<reference key="1">
    <citation type="journal article" date="2002" name="Nature">
        <title>Comparison of the genomes of two Xanthomonas pathogens with differing host specificities.</title>
        <authorList>
            <person name="da Silva A.C.R."/>
            <person name="Ferro J.A."/>
            <person name="Reinach F.C."/>
            <person name="Farah C.S."/>
            <person name="Furlan L.R."/>
            <person name="Quaggio R.B."/>
            <person name="Monteiro-Vitorello C.B."/>
            <person name="Van Sluys M.A."/>
            <person name="Almeida N.F. Jr."/>
            <person name="Alves L.M.C."/>
            <person name="do Amaral A.M."/>
            <person name="Bertolini M.C."/>
            <person name="Camargo L.E.A."/>
            <person name="Camarotte G."/>
            <person name="Cannavan F."/>
            <person name="Cardozo J."/>
            <person name="Chambergo F."/>
            <person name="Ciapina L.P."/>
            <person name="Cicarelli R.M.B."/>
            <person name="Coutinho L.L."/>
            <person name="Cursino-Santos J.R."/>
            <person name="El-Dorry H."/>
            <person name="Faria J.B."/>
            <person name="Ferreira A.J.S."/>
            <person name="Ferreira R.C.C."/>
            <person name="Ferro M.I.T."/>
            <person name="Formighieri E.F."/>
            <person name="Franco M.C."/>
            <person name="Greggio C.C."/>
            <person name="Gruber A."/>
            <person name="Katsuyama A.M."/>
            <person name="Kishi L.T."/>
            <person name="Leite R.P."/>
            <person name="Lemos E.G.M."/>
            <person name="Lemos M.V.F."/>
            <person name="Locali E.C."/>
            <person name="Machado M.A."/>
            <person name="Madeira A.M.B.N."/>
            <person name="Martinez-Rossi N.M."/>
            <person name="Martins E.C."/>
            <person name="Meidanis J."/>
            <person name="Menck C.F.M."/>
            <person name="Miyaki C.Y."/>
            <person name="Moon D.H."/>
            <person name="Moreira L.M."/>
            <person name="Novo M.T.M."/>
            <person name="Okura V.K."/>
            <person name="Oliveira M.C."/>
            <person name="Oliveira V.R."/>
            <person name="Pereira H.A."/>
            <person name="Rossi A."/>
            <person name="Sena J.A.D."/>
            <person name="Silva C."/>
            <person name="de Souza R.F."/>
            <person name="Spinola L.A.F."/>
            <person name="Takita M.A."/>
            <person name="Tamura R.E."/>
            <person name="Teixeira E.C."/>
            <person name="Tezza R.I.D."/>
            <person name="Trindade dos Santos M."/>
            <person name="Truffi D."/>
            <person name="Tsai S.M."/>
            <person name="White F.F."/>
            <person name="Setubal J.C."/>
            <person name="Kitajima J.P."/>
        </authorList>
    </citation>
    <scope>NUCLEOTIDE SEQUENCE [LARGE SCALE GENOMIC DNA]</scope>
    <source>
        <strain>306</strain>
    </source>
</reference>
<keyword id="KW-0067">ATP-binding</keyword>
<keyword id="KW-0119">Carbohydrate metabolism</keyword>
<keyword id="KW-0418">Kinase</keyword>
<keyword id="KW-0547">Nucleotide-binding</keyword>
<keyword id="KW-0808">Transferase</keyword>
<gene>
    <name evidence="1" type="primary">anmK</name>
    <name type="ordered locus">XAC3899</name>
</gene>
<accession>Q8PFS9</accession>
<dbReference type="EC" id="2.7.1.170" evidence="1"/>
<dbReference type="EMBL" id="AE008923">
    <property type="protein sequence ID" value="AAM38736.1"/>
    <property type="molecule type" value="Genomic_DNA"/>
</dbReference>
<dbReference type="SMR" id="Q8PFS9"/>
<dbReference type="KEGG" id="xac:XAC3899"/>
<dbReference type="eggNOG" id="COG2377">
    <property type="taxonomic scope" value="Bacteria"/>
</dbReference>
<dbReference type="HOGENOM" id="CLU_038782_0_0_6"/>
<dbReference type="UniPathway" id="UPA00343"/>
<dbReference type="UniPathway" id="UPA00544"/>
<dbReference type="Proteomes" id="UP000000576">
    <property type="component" value="Chromosome"/>
</dbReference>
<dbReference type="GO" id="GO:0005524">
    <property type="term" value="F:ATP binding"/>
    <property type="evidence" value="ECO:0007669"/>
    <property type="project" value="UniProtKB-UniRule"/>
</dbReference>
<dbReference type="GO" id="GO:0016301">
    <property type="term" value="F:kinase activity"/>
    <property type="evidence" value="ECO:0007669"/>
    <property type="project" value="UniProtKB-KW"/>
</dbReference>
<dbReference type="GO" id="GO:0016773">
    <property type="term" value="F:phosphotransferase activity, alcohol group as acceptor"/>
    <property type="evidence" value="ECO:0007669"/>
    <property type="project" value="UniProtKB-UniRule"/>
</dbReference>
<dbReference type="GO" id="GO:0097175">
    <property type="term" value="P:1,6-anhydro-N-acetyl-beta-muramic acid catabolic process"/>
    <property type="evidence" value="ECO:0007669"/>
    <property type="project" value="UniProtKB-UniRule"/>
</dbReference>
<dbReference type="GO" id="GO:0006040">
    <property type="term" value="P:amino sugar metabolic process"/>
    <property type="evidence" value="ECO:0007669"/>
    <property type="project" value="InterPro"/>
</dbReference>
<dbReference type="GO" id="GO:0009254">
    <property type="term" value="P:peptidoglycan turnover"/>
    <property type="evidence" value="ECO:0007669"/>
    <property type="project" value="UniProtKB-UniRule"/>
</dbReference>
<dbReference type="CDD" id="cd24050">
    <property type="entry name" value="ASKHA_NBD_ANMK"/>
    <property type="match status" value="1"/>
</dbReference>
<dbReference type="Gene3D" id="3.30.420.40">
    <property type="match status" value="2"/>
</dbReference>
<dbReference type="HAMAP" id="MF_01270">
    <property type="entry name" value="AnhMurNAc_kinase"/>
    <property type="match status" value="1"/>
</dbReference>
<dbReference type="InterPro" id="IPR005338">
    <property type="entry name" value="Anhydro_N_Ac-Mur_kinase"/>
</dbReference>
<dbReference type="InterPro" id="IPR043129">
    <property type="entry name" value="ATPase_NBD"/>
</dbReference>
<dbReference type="NCBIfam" id="NF007139">
    <property type="entry name" value="PRK09585.1-3"/>
    <property type="match status" value="1"/>
</dbReference>
<dbReference type="NCBIfam" id="NF007148">
    <property type="entry name" value="PRK09585.3-2"/>
    <property type="match status" value="1"/>
</dbReference>
<dbReference type="PANTHER" id="PTHR30605">
    <property type="entry name" value="ANHYDRO-N-ACETYLMURAMIC ACID KINASE"/>
    <property type="match status" value="1"/>
</dbReference>
<dbReference type="PANTHER" id="PTHR30605:SF0">
    <property type="entry name" value="ANHYDRO-N-ACETYLMURAMIC ACID KINASE"/>
    <property type="match status" value="1"/>
</dbReference>
<dbReference type="Pfam" id="PF03702">
    <property type="entry name" value="AnmK"/>
    <property type="match status" value="1"/>
</dbReference>
<dbReference type="SUPFAM" id="SSF53067">
    <property type="entry name" value="Actin-like ATPase domain"/>
    <property type="match status" value="1"/>
</dbReference>
<feature type="chain" id="PRO_0000250083" description="Anhydro-N-acetylmuramic acid kinase">
    <location>
        <begin position="1"/>
        <end position="374"/>
    </location>
</feature>
<feature type="binding site" evidence="1">
    <location>
        <begin position="15"/>
        <end position="22"/>
    </location>
    <ligand>
        <name>ATP</name>
        <dbReference type="ChEBI" id="CHEBI:30616"/>
    </ligand>
</feature>
<organism>
    <name type="scientific">Xanthomonas axonopodis pv. citri (strain 306)</name>
    <dbReference type="NCBI Taxonomy" id="190486"/>
    <lineage>
        <taxon>Bacteria</taxon>
        <taxon>Pseudomonadati</taxon>
        <taxon>Pseudomonadota</taxon>
        <taxon>Gammaproteobacteria</taxon>
        <taxon>Lysobacterales</taxon>
        <taxon>Lysobacteraceae</taxon>
        <taxon>Xanthomonas</taxon>
    </lineage>
</organism>
<comment type="function">
    <text evidence="1">Catalyzes the specific phosphorylation of 1,6-anhydro-N-acetylmuramic acid (anhMurNAc) with the simultaneous cleavage of the 1,6-anhydro ring, generating MurNAc-6-P. Is required for the utilization of anhMurNAc either imported from the medium or derived from its own cell wall murein, and thus plays a role in cell wall recycling.</text>
</comment>
<comment type="catalytic activity">
    <reaction evidence="1">
        <text>1,6-anhydro-N-acetyl-beta-muramate + ATP + H2O = N-acetyl-D-muramate 6-phosphate + ADP + H(+)</text>
        <dbReference type="Rhea" id="RHEA:24952"/>
        <dbReference type="ChEBI" id="CHEBI:15377"/>
        <dbReference type="ChEBI" id="CHEBI:15378"/>
        <dbReference type="ChEBI" id="CHEBI:30616"/>
        <dbReference type="ChEBI" id="CHEBI:58690"/>
        <dbReference type="ChEBI" id="CHEBI:58722"/>
        <dbReference type="ChEBI" id="CHEBI:456216"/>
        <dbReference type="EC" id="2.7.1.170"/>
    </reaction>
</comment>
<comment type="pathway">
    <text evidence="1">Amino-sugar metabolism; 1,6-anhydro-N-acetylmuramate degradation.</text>
</comment>
<comment type="pathway">
    <text evidence="1">Cell wall biogenesis; peptidoglycan recycling.</text>
</comment>
<comment type="similarity">
    <text evidence="1">Belongs to the anhydro-N-acetylmuramic acid kinase family.</text>
</comment>
<proteinExistence type="inferred from homology"/>
<evidence type="ECO:0000255" key="1">
    <source>
        <dbReference type="HAMAP-Rule" id="MF_01270"/>
    </source>
</evidence>
<protein>
    <recommendedName>
        <fullName evidence="1">Anhydro-N-acetylmuramic acid kinase</fullName>
        <ecNumber evidence="1">2.7.1.170</ecNumber>
    </recommendedName>
    <alternativeName>
        <fullName evidence="1">AnhMurNAc kinase</fullName>
    </alternativeName>
</protein>
<sequence length="374" mass="39117">MEHVDSPLYLGLMSGTSADGIDAALVRFADDTHRRCELVAGTTVAWEPQLRETLVALGQGAETVAIDALGQLDAQVGLAFAAAANQLIGDSGVERRQIRAIGSHGQTIRHRPNASPAFTWQIGDASRIAEHTGITTVADFRRRDVAAGGQGAPLMPAFHLAMLGAGDEDRAVLNLGGIGNLTLIPRDGAVRGFDTGPANALLDSWCQRHHGTPFDADGAFAASGRVDAALLQALLADPWFALPPPKSTGREQFHLDWAVQAMGNARLDAADVQATLLELTAASVADALLRLQPTTRRVLVCGGGVRNPVLLARLAARLPGAMVESSARYGLDPDYLEAMGFAWLAAELLAGRAANLPSVTGAAGPRLLGAIYPA</sequence>
<name>ANMK_XANAC</name>